<evidence type="ECO:0000255" key="1">
    <source>
        <dbReference type="HAMAP-Rule" id="MF_00564"/>
    </source>
</evidence>
<keyword id="KW-0548">Nucleotidyltransferase</keyword>
<keyword id="KW-0694">RNA-binding</keyword>
<keyword id="KW-0698">rRNA processing</keyword>
<keyword id="KW-0808">Transferase</keyword>
<keyword id="KW-0819">tRNA processing</keyword>
<keyword id="KW-0820">tRNA-binding</keyword>
<name>RNPH_ANAD2</name>
<protein>
    <recommendedName>
        <fullName evidence="1">Ribonuclease PH</fullName>
        <shortName evidence="1">RNase PH</shortName>
        <ecNumber evidence="1">2.7.7.56</ecNumber>
    </recommendedName>
    <alternativeName>
        <fullName evidence="1">tRNA nucleotidyltransferase</fullName>
    </alternativeName>
</protein>
<gene>
    <name evidence="1" type="primary">rph</name>
    <name type="ordered locus">A2cp1_3507</name>
</gene>
<dbReference type="EC" id="2.7.7.56" evidence="1"/>
<dbReference type="EMBL" id="CP001359">
    <property type="protein sequence ID" value="ACL66837.1"/>
    <property type="molecule type" value="Genomic_DNA"/>
</dbReference>
<dbReference type="RefSeq" id="WP_012527429.1">
    <property type="nucleotide sequence ID" value="NC_011891.1"/>
</dbReference>
<dbReference type="SMR" id="B8J5H5"/>
<dbReference type="KEGG" id="acp:A2cp1_3507"/>
<dbReference type="HOGENOM" id="CLU_050858_0_0_7"/>
<dbReference type="Proteomes" id="UP000007089">
    <property type="component" value="Chromosome"/>
</dbReference>
<dbReference type="GO" id="GO:0000175">
    <property type="term" value="F:3'-5'-RNA exonuclease activity"/>
    <property type="evidence" value="ECO:0007669"/>
    <property type="project" value="UniProtKB-UniRule"/>
</dbReference>
<dbReference type="GO" id="GO:0000049">
    <property type="term" value="F:tRNA binding"/>
    <property type="evidence" value="ECO:0007669"/>
    <property type="project" value="UniProtKB-UniRule"/>
</dbReference>
<dbReference type="GO" id="GO:0009022">
    <property type="term" value="F:tRNA nucleotidyltransferase activity"/>
    <property type="evidence" value="ECO:0007669"/>
    <property type="project" value="UniProtKB-UniRule"/>
</dbReference>
<dbReference type="GO" id="GO:0016075">
    <property type="term" value="P:rRNA catabolic process"/>
    <property type="evidence" value="ECO:0007669"/>
    <property type="project" value="UniProtKB-UniRule"/>
</dbReference>
<dbReference type="GO" id="GO:0006364">
    <property type="term" value="P:rRNA processing"/>
    <property type="evidence" value="ECO:0007669"/>
    <property type="project" value="UniProtKB-KW"/>
</dbReference>
<dbReference type="GO" id="GO:0008033">
    <property type="term" value="P:tRNA processing"/>
    <property type="evidence" value="ECO:0007669"/>
    <property type="project" value="UniProtKB-UniRule"/>
</dbReference>
<dbReference type="CDD" id="cd11362">
    <property type="entry name" value="RNase_PH_bact"/>
    <property type="match status" value="1"/>
</dbReference>
<dbReference type="FunFam" id="3.30.230.70:FF:000003">
    <property type="entry name" value="Ribonuclease PH"/>
    <property type="match status" value="1"/>
</dbReference>
<dbReference type="Gene3D" id="3.30.230.70">
    <property type="entry name" value="GHMP Kinase, N-terminal domain"/>
    <property type="match status" value="1"/>
</dbReference>
<dbReference type="HAMAP" id="MF_00564">
    <property type="entry name" value="RNase_PH"/>
    <property type="match status" value="1"/>
</dbReference>
<dbReference type="InterPro" id="IPR001247">
    <property type="entry name" value="ExoRNase_PH_dom1"/>
</dbReference>
<dbReference type="InterPro" id="IPR015847">
    <property type="entry name" value="ExoRNase_PH_dom2"/>
</dbReference>
<dbReference type="InterPro" id="IPR036345">
    <property type="entry name" value="ExoRNase_PH_dom2_sf"/>
</dbReference>
<dbReference type="InterPro" id="IPR027408">
    <property type="entry name" value="PNPase/RNase_PH_dom_sf"/>
</dbReference>
<dbReference type="InterPro" id="IPR020568">
    <property type="entry name" value="Ribosomal_Su5_D2-typ_SF"/>
</dbReference>
<dbReference type="InterPro" id="IPR050080">
    <property type="entry name" value="RNase_PH"/>
</dbReference>
<dbReference type="InterPro" id="IPR002381">
    <property type="entry name" value="RNase_PH_bac-type"/>
</dbReference>
<dbReference type="InterPro" id="IPR018336">
    <property type="entry name" value="RNase_PH_CS"/>
</dbReference>
<dbReference type="NCBIfam" id="TIGR01966">
    <property type="entry name" value="RNasePH"/>
    <property type="match status" value="1"/>
</dbReference>
<dbReference type="PANTHER" id="PTHR11953">
    <property type="entry name" value="EXOSOME COMPLEX COMPONENT"/>
    <property type="match status" value="1"/>
</dbReference>
<dbReference type="PANTHER" id="PTHR11953:SF0">
    <property type="entry name" value="EXOSOME COMPLEX COMPONENT RRP41"/>
    <property type="match status" value="1"/>
</dbReference>
<dbReference type="Pfam" id="PF01138">
    <property type="entry name" value="RNase_PH"/>
    <property type="match status" value="1"/>
</dbReference>
<dbReference type="Pfam" id="PF03725">
    <property type="entry name" value="RNase_PH_C"/>
    <property type="match status" value="1"/>
</dbReference>
<dbReference type="SUPFAM" id="SSF55666">
    <property type="entry name" value="Ribonuclease PH domain 2-like"/>
    <property type="match status" value="1"/>
</dbReference>
<dbReference type="SUPFAM" id="SSF54211">
    <property type="entry name" value="Ribosomal protein S5 domain 2-like"/>
    <property type="match status" value="1"/>
</dbReference>
<dbReference type="PROSITE" id="PS01277">
    <property type="entry name" value="RIBONUCLEASE_PH"/>
    <property type="match status" value="1"/>
</dbReference>
<comment type="function">
    <text evidence="1">Phosphorolytic 3'-5' exoribonuclease that plays an important role in tRNA 3'-end maturation. Removes nucleotide residues following the 3'-CCA terminus of tRNAs; can also add nucleotides to the ends of RNA molecules by using nucleoside diphosphates as substrates, but this may not be physiologically important. Probably plays a role in initiation of 16S rRNA degradation (leading to ribosome degradation) during starvation.</text>
</comment>
<comment type="catalytic activity">
    <reaction evidence="1">
        <text>tRNA(n+1) + phosphate = tRNA(n) + a ribonucleoside 5'-diphosphate</text>
        <dbReference type="Rhea" id="RHEA:10628"/>
        <dbReference type="Rhea" id="RHEA-COMP:17343"/>
        <dbReference type="Rhea" id="RHEA-COMP:17344"/>
        <dbReference type="ChEBI" id="CHEBI:43474"/>
        <dbReference type="ChEBI" id="CHEBI:57930"/>
        <dbReference type="ChEBI" id="CHEBI:173114"/>
        <dbReference type="EC" id="2.7.7.56"/>
    </reaction>
</comment>
<comment type="subunit">
    <text evidence="1">Homohexameric ring arranged as a trimer of dimers.</text>
</comment>
<comment type="similarity">
    <text evidence="1">Belongs to the RNase PH family.</text>
</comment>
<feature type="chain" id="PRO_1000194463" description="Ribonuclease PH">
    <location>
        <begin position="1"/>
        <end position="239"/>
    </location>
</feature>
<feature type="binding site" evidence="1">
    <location>
        <position position="86"/>
    </location>
    <ligand>
        <name>phosphate</name>
        <dbReference type="ChEBI" id="CHEBI:43474"/>
        <note>substrate</note>
    </ligand>
</feature>
<feature type="binding site" evidence="1">
    <location>
        <begin position="124"/>
        <end position="126"/>
    </location>
    <ligand>
        <name>phosphate</name>
        <dbReference type="ChEBI" id="CHEBI:43474"/>
        <note>substrate</note>
    </ligand>
</feature>
<reference key="1">
    <citation type="submission" date="2009-01" db="EMBL/GenBank/DDBJ databases">
        <title>Complete sequence of Anaeromyxobacter dehalogenans 2CP-1.</title>
        <authorList>
            <person name="Lucas S."/>
            <person name="Copeland A."/>
            <person name="Lapidus A."/>
            <person name="Glavina del Rio T."/>
            <person name="Dalin E."/>
            <person name="Tice H."/>
            <person name="Bruce D."/>
            <person name="Goodwin L."/>
            <person name="Pitluck S."/>
            <person name="Saunders E."/>
            <person name="Brettin T."/>
            <person name="Detter J.C."/>
            <person name="Han C."/>
            <person name="Larimer F."/>
            <person name="Land M."/>
            <person name="Hauser L."/>
            <person name="Kyrpides N."/>
            <person name="Ovchinnikova G."/>
            <person name="Beliaev A.S."/>
            <person name="Richardson P."/>
        </authorList>
    </citation>
    <scope>NUCLEOTIDE SEQUENCE [LARGE SCALE GENOMIC DNA]</scope>
    <source>
        <strain>2CP-1 / ATCC BAA-258</strain>
    </source>
</reference>
<proteinExistence type="inferred from homology"/>
<sequence>MRKNGRGELDLRPILLEPRVSKHAEGSCLVRFGDTHVLCTASVDEKVPPHVYGTGAGWVTAEYGMLPRSTHERMQREAARGKQTGRTLEIQRLVGRALRAAVDLRAIGPRTVTLDCDVIQADGGTRTAAITGAYVALVQAVRGIQKRRQLAQDPVKRSVAAVSVGIVAGQVHLDLDYDEDSTAEVDMNVVATGDGALVEVQGTAEGKPFPRAELDRMLDAALAGLSRLKELQEAALRTP</sequence>
<organism>
    <name type="scientific">Anaeromyxobacter dehalogenans (strain 2CP-1 / ATCC BAA-258)</name>
    <dbReference type="NCBI Taxonomy" id="455488"/>
    <lineage>
        <taxon>Bacteria</taxon>
        <taxon>Pseudomonadati</taxon>
        <taxon>Myxococcota</taxon>
        <taxon>Myxococcia</taxon>
        <taxon>Myxococcales</taxon>
        <taxon>Cystobacterineae</taxon>
        <taxon>Anaeromyxobacteraceae</taxon>
        <taxon>Anaeromyxobacter</taxon>
    </lineage>
</organism>
<accession>B8J5H5</accession>